<proteinExistence type="evidence at protein level"/>
<keyword id="KW-0119">Carbohydrate metabolism</keyword>
<keyword id="KW-0413">Isomerase</keyword>
<keyword id="KW-1185">Reference proteome</keyword>
<sequence>MSLLAQLDQKIAANGGLIVSCQPVPDSPLDKPEIVAAMALAAEQAGAVAIRIEGVANLQATRAVVSVPIIGIVKRDLEDSPVRITAYIEDVDALAQAGADIIAIDGTDRPRPVPVETLLARIHHHGLLAMTDCSTPEDGLACQKLGAEIIGTTLSGYTTPETPEEPDLALVKTLSDAGCRVIAEGRYNTPAQAADAMRHGAWAVTVGSAITRLEHICQWYNTAMKKAVL</sequence>
<evidence type="ECO:0000269" key="1">
    <source>
    </source>
</evidence>
<evidence type="ECO:0000305" key="2"/>
<comment type="function">
    <text evidence="2">Converts N-acetylmannosamine-6-phosphate (ManNAc-6-P) to N-acetylglucosamine-6-phosphate (GlcNAc-6-P).</text>
</comment>
<comment type="catalytic activity">
    <reaction>
        <text>an N-acyl-D-glucosamine 6-phosphate = an N-acyl-D-mannosamine 6-phosphate</text>
        <dbReference type="Rhea" id="RHEA:23932"/>
        <dbReference type="ChEBI" id="CHEBI:57599"/>
        <dbReference type="ChEBI" id="CHEBI:57666"/>
        <dbReference type="EC" id="5.1.3.9"/>
    </reaction>
</comment>
<comment type="pathway">
    <text>Amino-sugar metabolism; N-acetylneuraminate degradation; D-fructose 6-phosphate from N-acetylneuraminate: step 3/5.</text>
</comment>
<comment type="interaction">
    <interactant intactId="EBI-561432">
        <id>P0A761</id>
    </interactant>
    <interactant intactId="EBI-545740">
        <id>P06709</id>
        <label>birA</label>
    </interactant>
    <organismsDiffer>false</organismsDiffer>
    <experiments>2</experiments>
</comment>
<comment type="interaction">
    <interactant intactId="EBI-561432">
        <id>P0A761</id>
    </interactant>
    <interactant intactId="EBI-562060">
        <id>P76316</id>
        <label>dcyD</label>
    </interactant>
    <organismsDiffer>false</organismsDiffer>
    <experiments>2</experiments>
</comment>
<comment type="induction">
    <text evidence="1">Negatively regulated by the transcriptional repressor NanR. Induced by N-acetylneuraminate, via inactivation of NanR.</text>
</comment>
<comment type="similarity">
    <text evidence="2">Belongs to the NanE family.</text>
</comment>
<dbReference type="EC" id="5.1.3.9"/>
<dbReference type="EMBL" id="U18997">
    <property type="protein sequence ID" value="AAA58025.1"/>
    <property type="molecule type" value="Genomic_DNA"/>
</dbReference>
<dbReference type="EMBL" id="U00096">
    <property type="protein sequence ID" value="AAC76255.1"/>
    <property type="molecule type" value="Genomic_DNA"/>
</dbReference>
<dbReference type="EMBL" id="AP009048">
    <property type="protein sequence ID" value="BAE77266.1"/>
    <property type="molecule type" value="Genomic_DNA"/>
</dbReference>
<dbReference type="PIR" id="A65114">
    <property type="entry name" value="A65114"/>
</dbReference>
<dbReference type="RefSeq" id="NP_417690.1">
    <property type="nucleotide sequence ID" value="NC_000913.3"/>
</dbReference>
<dbReference type="RefSeq" id="WP_000054239.1">
    <property type="nucleotide sequence ID" value="NZ_STEB01000012.1"/>
</dbReference>
<dbReference type="SMR" id="P0A761"/>
<dbReference type="BioGRID" id="4261228">
    <property type="interactions" value="125"/>
</dbReference>
<dbReference type="DIP" id="DIP-48021N"/>
<dbReference type="FunCoup" id="P0A761">
    <property type="interactions" value="218"/>
</dbReference>
<dbReference type="IntAct" id="P0A761">
    <property type="interactions" value="8"/>
</dbReference>
<dbReference type="STRING" id="511145.b3223"/>
<dbReference type="jPOST" id="P0A761"/>
<dbReference type="PaxDb" id="511145-b3223"/>
<dbReference type="EnsemblBacteria" id="AAC76255">
    <property type="protein sequence ID" value="AAC76255"/>
    <property type="gene ID" value="b3223"/>
</dbReference>
<dbReference type="GeneID" id="947745"/>
<dbReference type="KEGG" id="ecj:JW3192"/>
<dbReference type="KEGG" id="eco:b3223"/>
<dbReference type="KEGG" id="ecoc:C3026_17535"/>
<dbReference type="PATRIC" id="fig|1411691.4.peg.3505"/>
<dbReference type="EchoBASE" id="EB2667"/>
<dbReference type="eggNOG" id="COG3010">
    <property type="taxonomic scope" value="Bacteria"/>
</dbReference>
<dbReference type="HOGENOM" id="CLU_086300_0_0_6"/>
<dbReference type="InParanoid" id="P0A761"/>
<dbReference type="OMA" id="TRPMEIT"/>
<dbReference type="OrthoDB" id="9810372at2"/>
<dbReference type="PhylomeDB" id="P0A761"/>
<dbReference type="BioCyc" id="EcoCyc:NANE-MONOMER"/>
<dbReference type="BioCyc" id="MetaCyc:NANE-MONOMER"/>
<dbReference type="UniPathway" id="UPA00629">
    <property type="reaction ID" value="UER00682"/>
</dbReference>
<dbReference type="PRO" id="PR:P0A761"/>
<dbReference type="Proteomes" id="UP000000625">
    <property type="component" value="Chromosome"/>
</dbReference>
<dbReference type="GO" id="GO:0005829">
    <property type="term" value="C:cytosol"/>
    <property type="evidence" value="ECO:0000314"/>
    <property type="project" value="EcoCyc"/>
</dbReference>
<dbReference type="GO" id="GO:0047465">
    <property type="term" value="F:N-acylglucosamine-6-phosphate 2-epimerase activity"/>
    <property type="evidence" value="ECO:0000314"/>
    <property type="project" value="EcoCyc"/>
</dbReference>
<dbReference type="GO" id="GO:0005975">
    <property type="term" value="P:carbohydrate metabolic process"/>
    <property type="evidence" value="ECO:0007669"/>
    <property type="project" value="UniProtKB-UniRule"/>
</dbReference>
<dbReference type="GO" id="GO:0006053">
    <property type="term" value="P:N-acetylmannosamine catabolic process"/>
    <property type="evidence" value="ECO:0000315"/>
    <property type="project" value="EcoCyc"/>
</dbReference>
<dbReference type="GO" id="GO:0019262">
    <property type="term" value="P:N-acetylneuraminate catabolic process"/>
    <property type="evidence" value="ECO:0000315"/>
    <property type="project" value="EcoCyc"/>
</dbReference>
<dbReference type="CDD" id="cd04729">
    <property type="entry name" value="NanE"/>
    <property type="match status" value="1"/>
</dbReference>
<dbReference type="FunFam" id="3.20.20.70:FF:000035">
    <property type="entry name" value="Putative N-acetylmannosamine-6-phosphate 2-epimerase"/>
    <property type="match status" value="1"/>
</dbReference>
<dbReference type="Gene3D" id="3.20.20.70">
    <property type="entry name" value="Aldolase class I"/>
    <property type="match status" value="1"/>
</dbReference>
<dbReference type="HAMAP" id="MF_01235">
    <property type="entry name" value="ManNAc6P_epimer"/>
    <property type="match status" value="1"/>
</dbReference>
<dbReference type="InterPro" id="IPR013785">
    <property type="entry name" value="Aldolase_TIM"/>
</dbReference>
<dbReference type="InterPro" id="IPR007260">
    <property type="entry name" value="NanE"/>
</dbReference>
<dbReference type="InterPro" id="IPR011060">
    <property type="entry name" value="RibuloseP-bd_barrel"/>
</dbReference>
<dbReference type="NCBIfam" id="NF002231">
    <property type="entry name" value="PRK01130.1"/>
    <property type="match status" value="1"/>
</dbReference>
<dbReference type="PANTHER" id="PTHR36204">
    <property type="entry name" value="N-ACETYLMANNOSAMINE-6-PHOSPHATE 2-EPIMERASE-RELATED"/>
    <property type="match status" value="1"/>
</dbReference>
<dbReference type="PANTHER" id="PTHR36204:SF1">
    <property type="entry name" value="N-ACETYLMANNOSAMINE-6-PHOSPHATE 2-EPIMERASE-RELATED"/>
    <property type="match status" value="1"/>
</dbReference>
<dbReference type="Pfam" id="PF04131">
    <property type="entry name" value="NanE"/>
    <property type="match status" value="1"/>
</dbReference>
<dbReference type="SUPFAM" id="SSF51366">
    <property type="entry name" value="Ribulose-phoshate binding barrel"/>
    <property type="match status" value="1"/>
</dbReference>
<organism>
    <name type="scientific">Escherichia coli (strain K12)</name>
    <dbReference type="NCBI Taxonomy" id="83333"/>
    <lineage>
        <taxon>Bacteria</taxon>
        <taxon>Pseudomonadati</taxon>
        <taxon>Pseudomonadota</taxon>
        <taxon>Gammaproteobacteria</taxon>
        <taxon>Enterobacterales</taxon>
        <taxon>Enterobacteriaceae</taxon>
        <taxon>Escherichia</taxon>
    </lineage>
</organism>
<name>NANE_ECOLI</name>
<gene>
    <name type="primary">nanE</name>
    <name type="synonym">yhcJ</name>
    <name type="ordered locus">b3223</name>
    <name type="ordered locus">JW3192</name>
</gene>
<protein>
    <recommendedName>
        <fullName>Putative N-acetylmannosamine-6-phosphate 2-epimerase</fullName>
        <ecNumber>5.1.3.9</ecNumber>
    </recommendedName>
    <alternativeName>
        <fullName>ManNAc-6-P epimerase</fullName>
    </alternativeName>
</protein>
<reference key="1">
    <citation type="journal article" date="1997" name="Science">
        <title>The complete genome sequence of Escherichia coli K-12.</title>
        <authorList>
            <person name="Blattner F.R."/>
            <person name="Plunkett G. III"/>
            <person name="Bloch C.A."/>
            <person name="Perna N.T."/>
            <person name="Burland V."/>
            <person name="Riley M."/>
            <person name="Collado-Vides J."/>
            <person name="Glasner J.D."/>
            <person name="Rode C.K."/>
            <person name="Mayhew G.F."/>
            <person name="Gregor J."/>
            <person name="Davis N.W."/>
            <person name="Kirkpatrick H.A."/>
            <person name="Goeden M.A."/>
            <person name="Rose D.J."/>
            <person name="Mau B."/>
            <person name="Shao Y."/>
        </authorList>
    </citation>
    <scope>NUCLEOTIDE SEQUENCE [LARGE SCALE GENOMIC DNA]</scope>
    <source>
        <strain>K12 / MG1655 / ATCC 47076</strain>
    </source>
</reference>
<reference key="2">
    <citation type="journal article" date="2006" name="Mol. Syst. Biol.">
        <title>Highly accurate genome sequences of Escherichia coli K-12 strains MG1655 and W3110.</title>
        <authorList>
            <person name="Hayashi K."/>
            <person name="Morooka N."/>
            <person name="Yamamoto Y."/>
            <person name="Fujita K."/>
            <person name="Isono K."/>
            <person name="Choi S."/>
            <person name="Ohtsubo E."/>
            <person name="Baba T."/>
            <person name="Wanner B.L."/>
            <person name="Mori H."/>
            <person name="Horiuchi T."/>
        </authorList>
    </citation>
    <scope>NUCLEOTIDE SEQUENCE [LARGE SCALE GENOMIC DNA]</scope>
    <source>
        <strain>K12 / W3110 / ATCC 27325 / DSM 5911</strain>
    </source>
</reference>
<reference key="3">
    <citation type="journal article" date="1999" name="J. Bacteriol.">
        <title>Convergent pathways for utilization of the amino sugars N-acetylglucosamine, N-acetylmannosamine, and N-acetylneuraminic acid by Escherichia coli.</title>
        <authorList>
            <person name="Plumbridge J."/>
            <person name="Vimr E."/>
        </authorList>
    </citation>
    <scope>PUTATIVE FUNCTION</scope>
</reference>
<reference key="4">
    <citation type="journal article" date="2013" name="J. Bacteriol.">
        <title>Control of the Escherichia coli sialoregulon by transcriptional repressor NanR.</title>
        <authorList>
            <person name="Kalivoda K.A."/>
            <person name="Steenbergen S.M."/>
            <person name="Vimr E.R."/>
        </authorList>
    </citation>
    <scope>INDUCTION</scope>
</reference>
<feature type="chain" id="PRO_0000179770" description="Putative N-acetylmannosamine-6-phosphate 2-epimerase">
    <location>
        <begin position="1"/>
        <end position="229"/>
    </location>
</feature>
<accession>P0A761</accession>
<accession>P45426</accession>
<accession>Q2M8Z0</accession>